<comment type="function">
    <text evidence="1">Catalyzes the phosphorylation of the position 2 hydroxy group of 4-diphosphocytidyl-2C-methyl-D-erythritol.</text>
</comment>
<comment type="catalytic activity">
    <reaction evidence="1">
        <text>4-CDP-2-C-methyl-D-erythritol + ATP = 4-CDP-2-C-methyl-D-erythritol 2-phosphate + ADP + H(+)</text>
        <dbReference type="Rhea" id="RHEA:18437"/>
        <dbReference type="ChEBI" id="CHEBI:15378"/>
        <dbReference type="ChEBI" id="CHEBI:30616"/>
        <dbReference type="ChEBI" id="CHEBI:57823"/>
        <dbReference type="ChEBI" id="CHEBI:57919"/>
        <dbReference type="ChEBI" id="CHEBI:456216"/>
        <dbReference type="EC" id="2.7.1.148"/>
    </reaction>
</comment>
<comment type="pathway">
    <text evidence="1">Isoprenoid biosynthesis; isopentenyl diphosphate biosynthesis via DXP pathway; isopentenyl diphosphate from 1-deoxy-D-xylulose 5-phosphate: step 3/6.</text>
</comment>
<comment type="similarity">
    <text evidence="1">Belongs to the GHMP kinase family. IspE subfamily.</text>
</comment>
<sequence length="299" mass="31207">MTAFQNAGPSITRLAPAKINLALHVTGRRDDGYHLLDMLVVFADQGDRIHIEKAGSDSFTVSGPFASGIPAGRGNLVLKARDALRQHGGPDLSPVAIHLEKNLPIASGIGGGSSDAAATLLALNTLWQLDLDFEMLAAIGLSLGADLPMCLHGAAHGTPLIARGIGEELNDVSGIAALPMLLVNDGTALATPDVFRALTRRENAPLPPPACEGTDALCAYLRETRNDLLPAAISLAPQIEPKLALLRAKGALYARMSGSGATCFAIFSDKSALTRAAKEIADENPGWFAVPSHSFPSRA</sequence>
<feature type="chain" id="PRO_0000189195" description="4-diphosphocytidyl-2-C-methyl-D-erythritol kinase">
    <location>
        <begin position="1"/>
        <end position="299"/>
    </location>
</feature>
<feature type="active site" evidence="1">
    <location>
        <position position="18"/>
    </location>
</feature>
<feature type="active site" evidence="1">
    <location>
        <position position="146"/>
    </location>
</feature>
<feature type="binding site" evidence="1">
    <location>
        <begin position="104"/>
        <end position="114"/>
    </location>
    <ligand>
        <name>ATP</name>
        <dbReference type="ChEBI" id="CHEBI:30616"/>
    </ligand>
</feature>
<name>ISPE_BRUME</name>
<reference key="1">
    <citation type="journal article" date="2002" name="Proc. Natl. Acad. Sci. U.S.A.">
        <title>The genome sequence of the facultative intracellular pathogen Brucella melitensis.</title>
        <authorList>
            <person name="DelVecchio V.G."/>
            <person name="Kapatral V."/>
            <person name="Redkar R.J."/>
            <person name="Patra G."/>
            <person name="Mujer C."/>
            <person name="Los T."/>
            <person name="Ivanova N."/>
            <person name="Anderson I."/>
            <person name="Bhattacharyya A."/>
            <person name="Lykidis A."/>
            <person name="Reznik G."/>
            <person name="Jablonski L."/>
            <person name="Larsen N."/>
            <person name="D'Souza M."/>
            <person name="Bernal A."/>
            <person name="Mazur M."/>
            <person name="Goltsman E."/>
            <person name="Selkov E."/>
            <person name="Elzer P.H."/>
            <person name="Hagius S."/>
            <person name="O'Callaghan D."/>
            <person name="Letesson J.-J."/>
            <person name="Haselkorn R."/>
            <person name="Kyrpides N.C."/>
            <person name="Overbeek R."/>
        </authorList>
    </citation>
    <scope>NUCLEOTIDE SEQUENCE [LARGE SCALE GENOMIC DNA]</scope>
    <source>
        <strain>ATCC 23456 / CCUG 17765 / NCTC 10094 / 16M</strain>
    </source>
</reference>
<protein>
    <recommendedName>
        <fullName evidence="1">4-diphosphocytidyl-2-C-methyl-D-erythritol kinase</fullName>
        <shortName evidence="1">CMK</shortName>
        <ecNumber evidence="1">2.7.1.148</ecNumber>
    </recommendedName>
    <alternativeName>
        <fullName evidence="1">4-(cytidine-5'-diphospho)-2-C-methyl-D-erythritol kinase</fullName>
    </alternativeName>
</protein>
<keyword id="KW-0067">ATP-binding</keyword>
<keyword id="KW-0414">Isoprene biosynthesis</keyword>
<keyword id="KW-0418">Kinase</keyword>
<keyword id="KW-0547">Nucleotide-binding</keyword>
<keyword id="KW-0808">Transferase</keyword>
<proteinExistence type="inferred from homology"/>
<organism>
    <name type="scientific">Brucella melitensis biotype 1 (strain ATCC 23456 / CCUG 17765 / NCTC 10094 / 16M)</name>
    <dbReference type="NCBI Taxonomy" id="224914"/>
    <lineage>
        <taxon>Bacteria</taxon>
        <taxon>Pseudomonadati</taxon>
        <taxon>Pseudomonadota</taxon>
        <taxon>Alphaproteobacteria</taxon>
        <taxon>Hyphomicrobiales</taxon>
        <taxon>Brucellaceae</taxon>
        <taxon>Brucella/Ochrobactrum group</taxon>
        <taxon>Brucella</taxon>
    </lineage>
</organism>
<dbReference type="EC" id="2.7.1.148" evidence="1"/>
<dbReference type="EMBL" id="AE008917">
    <property type="protein sequence ID" value="AAL52718.1"/>
    <property type="molecule type" value="Genomic_DNA"/>
</dbReference>
<dbReference type="PIR" id="AC3444">
    <property type="entry name" value="AC3444"/>
</dbReference>
<dbReference type="RefSeq" id="WP_004683026.1">
    <property type="nucleotide sequence ID" value="NZ_GG703778.1"/>
</dbReference>
<dbReference type="SMR" id="Q8YFI3"/>
<dbReference type="GeneID" id="29594382"/>
<dbReference type="KEGG" id="bme:BMEI1537"/>
<dbReference type="KEGG" id="bmel:DK63_1955"/>
<dbReference type="PATRIC" id="fig|224914.52.peg.2056"/>
<dbReference type="eggNOG" id="COG1947">
    <property type="taxonomic scope" value="Bacteria"/>
</dbReference>
<dbReference type="PhylomeDB" id="Q8YFI3"/>
<dbReference type="UniPathway" id="UPA00056">
    <property type="reaction ID" value="UER00094"/>
</dbReference>
<dbReference type="Proteomes" id="UP000000419">
    <property type="component" value="Chromosome I"/>
</dbReference>
<dbReference type="GO" id="GO:0050515">
    <property type="term" value="F:4-(cytidine 5'-diphospho)-2-C-methyl-D-erythritol kinase activity"/>
    <property type="evidence" value="ECO:0007669"/>
    <property type="project" value="UniProtKB-UniRule"/>
</dbReference>
<dbReference type="GO" id="GO:0005524">
    <property type="term" value="F:ATP binding"/>
    <property type="evidence" value="ECO:0007669"/>
    <property type="project" value="UniProtKB-UniRule"/>
</dbReference>
<dbReference type="GO" id="GO:0019288">
    <property type="term" value="P:isopentenyl diphosphate biosynthetic process, methylerythritol 4-phosphate pathway"/>
    <property type="evidence" value="ECO:0007669"/>
    <property type="project" value="UniProtKB-UniRule"/>
</dbReference>
<dbReference type="GO" id="GO:0016114">
    <property type="term" value="P:terpenoid biosynthetic process"/>
    <property type="evidence" value="ECO:0007669"/>
    <property type="project" value="InterPro"/>
</dbReference>
<dbReference type="Gene3D" id="3.30.230.10">
    <property type="match status" value="1"/>
</dbReference>
<dbReference type="Gene3D" id="3.30.70.890">
    <property type="entry name" value="GHMP kinase, C-terminal domain"/>
    <property type="match status" value="1"/>
</dbReference>
<dbReference type="HAMAP" id="MF_00061">
    <property type="entry name" value="IspE"/>
    <property type="match status" value="1"/>
</dbReference>
<dbReference type="InterPro" id="IPR013750">
    <property type="entry name" value="GHMP_kinase_C_dom"/>
</dbReference>
<dbReference type="InterPro" id="IPR036554">
    <property type="entry name" value="GHMP_kinase_C_sf"/>
</dbReference>
<dbReference type="InterPro" id="IPR006204">
    <property type="entry name" value="GHMP_kinase_N_dom"/>
</dbReference>
<dbReference type="InterPro" id="IPR004424">
    <property type="entry name" value="IspE"/>
</dbReference>
<dbReference type="InterPro" id="IPR020568">
    <property type="entry name" value="Ribosomal_Su5_D2-typ_SF"/>
</dbReference>
<dbReference type="InterPro" id="IPR014721">
    <property type="entry name" value="Ribsml_uS5_D2-typ_fold_subgr"/>
</dbReference>
<dbReference type="NCBIfam" id="TIGR00154">
    <property type="entry name" value="ispE"/>
    <property type="match status" value="1"/>
</dbReference>
<dbReference type="NCBIfam" id="NF011202">
    <property type="entry name" value="PRK14608.1"/>
    <property type="match status" value="1"/>
</dbReference>
<dbReference type="PANTHER" id="PTHR43527">
    <property type="entry name" value="4-DIPHOSPHOCYTIDYL-2-C-METHYL-D-ERYTHRITOL KINASE, CHLOROPLASTIC"/>
    <property type="match status" value="1"/>
</dbReference>
<dbReference type="PANTHER" id="PTHR43527:SF2">
    <property type="entry name" value="4-DIPHOSPHOCYTIDYL-2-C-METHYL-D-ERYTHRITOL KINASE, CHLOROPLASTIC"/>
    <property type="match status" value="1"/>
</dbReference>
<dbReference type="Pfam" id="PF08544">
    <property type="entry name" value="GHMP_kinases_C"/>
    <property type="match status" value="1"/>
</dbReference>
<dbReference type="Pfam" id="PF00288">
    <property type="entry name" value="GHMP_kinases_N"/>
    <property type="match status" value="1"/>
</dbReference>
<dbReference type="PIRSF" id="PIRSF010376">
    <property type="entry name" value="IspE"/>
    <property type="match status" value="1"/>
</dbReference>
<dbReference type="SUPFAM" id="SSF55060">
    <property type="entry name" value="GHMP Kinase, C-terminal domain"/>
    <property type="match status" value="1"/>
</dbReference>
<dbReference type="SUPFAM" id="SSF54211">
    <property type="entry name" value="Ribosomal protein S5 domain 2-like"/>
    <property type="match status" value="1"/>
</dbReference>
<evidence type="ECO:0000255" key="1">
    <source>
        <dbReference type="HAMAP-Rule" id="MF_00061"/>
    </source>
</evidence>
<gene>
    <name evidence="1" type="primary">ispE</name>
    <name type="ordered locus">BMEI1537</name>
</gene>
<accession>Q8YFI3</accession>